<protein>
    <recommendedName>
        <fullName>Putative gamma-taxilin 2</fullName>
    </recommendedName>
    <alternativeName>
        <fullName>Gamma-taxilin 2 pseudogene</fullName>
    </alternativeName>
    <alternativeName>
        <fullName>Taxilin gamma pseudogene, Y-linked</fullName>
    </alternativeName>
</protein>
<feature type="chain" id="PRO_0000189428" description="Putative gamma-taxilin 2">
    <location>
        <begin position="1"/>
        <end position="131"/>
    </location>
</feature>
<sequence>MEEAGLCGLREKADMLCNSESHDILQHQDSNCSATSNKHLLEDEEGRDFITKNRSWVSPVHCTQESRRELPEQEVAPPSGQQALQCNRNKEKVLGKEVLLLMQALNTLSTPEEKLAALCKKYADLGNSPLL</sequence>
<reference key="1">
    <citation type="submission" date="2000-12" db="EMBL/GenBank/DDBJ databases">
        <authorList>
            <person name="Kuroda-Kawaguchi T."/>
            <person name="Skaletsky H."/>
            <person name="Minx P.J."/>
            <person name="Brown L.G."/>
            <person name="Rozen S."/>
            <person name="Wilson R.K."/>
            <person name="Waterston R.H."/>
            <person name="Page D.C."/>
        </authorList>
    </citation>
    <scope>NUCLEOTIDE SEQUENCE [LARGE SCALE MRNA]</scope>
    <scope>TISSUE SPECIFICITY</scope>
    <source>
        <tissue>Testis</tissue>
    </source>
</reference>
<reference key="2">
    <citation type="journal article" date="2003" name="Nature">
        <title>The male-specific region of the human Y chromosome is a mosaic of discrete sequence classes.</title>
        <authorList>
            <person name="Skaletsky H."/>
            <person name="Kuroda-Kawaguchi T."/>
            <person name="Minx P.J."/>
            <person name="Cordum H.S."/>
            <person name="Hillier L.W."/>
            <person name="Brown L.G."/>
            <person name="Repping S."/>
            <person name="Pyntikova T."/>
            <person name="Ali J."/>
            <person name="Bieri T."/>
            <person name="Chinwalla A."/>
            <person name="Delehaunty A."/>
            <person name="Delehaunty K."/>
            <person name="Du H."/>
            <person name="Fewell G."/>
            <person name="Fulton L."/>
            <person name="Fulton R."/>
            <person name="Graves T.A."/>
            <person name="Hou S.-F."/>
            <person name="Latrielle P."/>
            <person name="Leonard S."/>
            <person name="Mardis E."/>
            <person name="Maupin R."/>
            <person name="McPherson J."/>
            <person name="Miner T."/>
            <person name="Nash W."/>
            <person name="Nguyen C."/>
            <person name="Ozersky P."/>
            <person name="Pepin K."/>
            <person name="Rock S."/>
            <person name="Rohlfing T."/>
            <person name="Scott K."/>
            <person name="Schultz B."/>
            <person name="Strong C."/>
            <person name="Tin-Wollam A."/>
            <person name="Yang S.-P."/>
            <person name="Waterston R.H."/>
            <person name="Wilson R.K."/>
            <person name="Rozen S."/>
            <person name="Page D.C."/>
        </authorList>
    </citation>
    <scope>NUCLEOTIDE SEQUENCE [LARGE SCALE GENOMIC DNA]</scope>
    <scope>TISSUE SPECIFICITY</scope>
</reference>
<accession>Q9BZA5</accession>
<proteinExistence type="uncertain"/>
<comment type="tissue specificity">
    <text evidence="1 2">Ubiquitously expressed.</text>
</comment>
<comment type="similarity">
    <text evidence="3">Belongs to the taxilin family.</text>
</comment>
<comment type="caution">
    <text evidence="3">Could be the product of a pseudogene. Product of a degenerated gene that is homologous to the 5'-portion of the X-linked TXLNG gene.</text>
</comment>
<comment type="sequence caution" evidence="3">
    <conflict type="erroneous initiation">
        <sequence resource="EMBL-CDS" id="AAK13476"/>
    </conflict>
    <text>Extended N-terminus.</text>
</comment>
<comment type="sequence caution" evidence="3">
    <conflict type="frameshift">
        <sequence resource="EMBL-CDS" id="AAK13476"/>
    </conflict>
</comment>
<dbReference type="EMBL" id="AF332224">
    <property type="protein sequence ID" value="AAK13476.1"/>
    <property type="status" value="ALT_SEQ"/>
    <property type="molecule type" value="mRNA"/>
</dbReference>
<dbReference type="EMBL" id="AC009977">
    <property type="status" value="NOT_ANNOTATED_CDS"/>
    <property type="molecule type" value="Genomic_DNA"/>
</dbReference>
<dbReference type="EMBL" id="AC010137">
    <property type="status" value="NOT_ANNOTATED_CDS"/>
    <property type="molecule type" value="Genomic_DNA"/>
</dbReference>
<dbReference type="SMR" id="Q9BZA5"/>
<dbReference type="iPTMnet" id="Q9BZA5"/>
<dbReference type="PhosphoSitePlus" id="Q9BZA5"/>
<dbReference type="BioMuta" id="HGNC:18473"/>
<dbReference type="jPOST" id="Q9BZA5"/>
<dbReference type="MassIVE" id="Q9BZA5"/>
<dbReference type="AGR" id="HGNC:18473"/>
<dbReference type="GeneCards" id="TXLNGY"/>
<dbReference type="HGNC" id="HGNC:18473">
    <property type="gene designation" value="TXLNGY"/>
</dbReference>
<dbReference type="MIM" id="400031">
    <property type="type" value="gene"/>
</dbReference>
<dbReference type="neXtProt" id="NX_Q9BZA5"/>
<dbReference type="InParanoid" id="Q9BZA5"/>
<dbReference type="PAN-GO" id="Q9BZA5">
    <property type="GO annotations" value="0 GO annotations based on evolutionary models"/>
</dbReference>
<dbReference type="PhylomeDB" id="Q9BZA5"/>
<dbReference type="PathwayCommons" id="Q9BZA5"/>
<dbReference type="ChiTaRS" id="TXLNGY">
    <property type="organism name" value="human"/>
</dbReference>
<dbReference type="Pharos" id="Q9BZA5">
    <property type="development level" value="Tdark"/>
</dbReference>
<dbReference type="Proteomes" id="UP000005640">
    <property type="component" value="Unplaced"/>
</dbReference>
<dbReference type="RNAct" id="Q9BZA5">
    <property type="molecule type" value="protein"/>
</dbReference>
<dbReference type="GO" id="GO:0019905">
    <property type="term" value="F:syntaxin binding"/>
    <property type="evidence" value="ECO:0007669"/>
    <property type="project" value="InterPro"/>
</dbReference>
<dbReference type="InterPro" id="IPR026183">
    <property type="entry name" value="Taxilin_fam"/>
</dbReference>
<dbReference type="PANTHER" id="PTHR16127:SF14">
    <property type="entry name" value="GAMMA-TAXILIN"/>
    <property type="match status" value="1"/>
</dbReference>
<dbReference type="PANTHER" id="PTHR16127">
    <property type="entry name" value="TAXILIN"/>
    <property type="match status" value="1"/>
</dbReference>
<organism>
    <name type="scientific">Homo sapiens</name>
    <name type="common">Human</name>
    <dbReference type="NCBI Taxonomy" id="9606"/>
    <lineage>
        <taxon>Eukaryota</taxon>
        <taxon>Metazoa</taxon>
        <taxon>Chordata</taxon>
        <taxon>Craniata</taxon>
        <taxon>Vertebrata</taxon>
        <taxon>Euteleostomi</taxon>
        <taxon>Mammalia</taxon>
        <taxon>Eutheria</taxon>
        <taxon>Euarchontoglires</taxon>
        <taxon>Primates</taxon>
        <taxon>Haplorrhini</taxon>
        <taxon>Catarrhini</taxon>
        <taxon>Hominidae</taxon>
        <taxon>Homo</taxon>
    </lineage>
</organism>
<gene>
    <name type="primary">TXLNGY</name>
    <name type="synonym">CYorf15A</name>
    <name type="synonym">CYorf15B</name>
    <name type="synonym">TXLNG2P</name>
</gene>
<name>TXNG2_HUMAN</name>
<keyword id="KW-1267">Proteomics identification</keyword>
<keyword id="KW-1185">Reference proteome</keyword>
<evidence type="ECO:0000269" key="1">
    <source>
    </source>
</evidence>
<evidence type="ECO:0000269" key="2">
    <source ref="1"/>
</evidence>
<evidence type="ECO:0000305" key="3"/>